<gene>
    <name evidence="1" type="primary">ldh</name>
    <name type="ordered locus">GK0475</name>
</gene>
<accession>Q5L2S0</accession>
<feature type="chain" id="PRO_0000237546" description="L-lactate dehydrogenase">
    <location>
        <begin position="1"/>
        <end position="317"/>
    </location>
</feature>
<feature type="active site" description="Proton acceptor" evidence="1">
    <location>
        <position position="179"/>
    </location>
</feature>
<feature type="binding site" evidence="1">
    <location>
        <position position="17"/>
    </location>
    <ligand>
        <name>NAD(+)</name>
        <dbReference type="ChEBI" id="CHEBI:57540"/>
    </ligand>
</feature>
<feature type="binding site" evidence="1">
    <location>
        <position position="38"/>
    </location>
    <ligand>
        <name>NAD(+)</name>
        <dbReference type="ChEBI" id="CHEBI:57540"/>
    </ligand>
</feature>
<feature type="binding site" evidence="1">
    <location>
        <position position="43"/>
    </location>
    <ligand>
        <name>NAD(+)</name>
        <dbReference type="ChEBI" id="CHEBI:57540"/>
    </ligand>
</feature>
<feature type="binding site" evidence="1">
    <location>
        <position position="69"/>
    </location>
    <ligand>
        <name>NAD(+)</name>
        <dbReference type="ChEBI" id="CHEBI:57540"/>
    </ligand>
</feature>
<feature type="binding site" evidence="1">
    <location>
        <begin position="83"/>
        <end position="84"/>
    </location>
    <ligand>
        <name>NAD(+)</name>
        <dbReference type="ChEBI" id="CHEBI:57540"/>
    </ligand>
</feature>
<feature type="binding site" evidence="1">
    <location>
        <position position="86"/>
    </location>
    <ligand>
        <name>substrate</name>
    </ligand>
</feature>
<feature type="binding site" evidence="1">
    <location>
        <position position="92"/>
    </location>
    <ligand>
        <name>substrate</name>
    </ligand>
</feature>
<feature type="binding site" evidence="1">
    <location>
        <position position="105"/>
    </location>
    <ligand>
        <name>NAD(+)</name>
        <dbReference type="ChEBI" id="CHEBI:57540"/>
    </ligand>
</feature>
<feature type="binding site" evidence="1">
    <location>
        <begin position="122"/>
        <end position="124"/>
    </location>
    <ligand>
        <name>NAD(+)</name>
        <dbReference type="ChEBI" id="CHEBI:57540"/>
    </ligand>
</feature>
<feature type="binding site" evidence="1">
    <location>
        <begin position="124"/>
        <end position="127"/>
    </location>
    <ligand>
        <name>substrate</name>
    </ligand>
</feature>
<feature type="binding site" evidence="1">
    <location>
        <position position="147"/>
    </location>
    <ligand>
        <name>NAD(+)</name>
        <dbReference type="ChEBI" id="CHEBI:57540"/>
    </ligand>
</feature>
<feature type="binding site" evidence="1">
    <location>
        <begin position="152"/>
        <end position="155"/>
    </location>
    <ligand>
        <name>substrate</name>
    </ligand>
</feature>
<feature type="binding site" evidence="1">
    <location>
        <position position="157"/>
    </location>
    <ligand>
        <name>beta-D-fructose 1,6-bisphosphate</name>
        <dbReference type="ChEBI" id="CHEBI:32966"/>
        <note>allosteric activator</note>
    </ligand>
</feature>
<feature type="binding site" evidence="1">
    <location>
        <position position="172"/>
    </location>
    <ligand>
        <name>beta-D-fructose 1,6-bisphosphate</name>
        <dbReference type="ChEBI" id="CHEBI:32966"/>
        <note>allosteric activator</note>
    </ligand>
</feature>
<feature type="binding site" evidence="1">
    <location>
        <position position="233"/>
    </location>
    <ligand>
        <name>substrate</name>
    </ligand>
</feature>
<feature type="modified residue" description="Phosphotyrosine" evidence="1">
    <location>
        <position position="224"/>
    </location>
</feature>
<organism>
    <name type="scientific">Geobacillus kaustophilus (strain HTA426)</name>
    <dbReference type="NCBI Taxonomy" id="235909"/>
    <lineage>
        <taxon>Bacteria</taxon>
        <taxon>Bacillati</taxon>
        <taxon>Bacillota</taxon>
        <taxon>Bacilli</taxon>
        <taxon>Bacillales</taxon>
        <taxon>Anoxybacillaceae</taxon>
        <taxon>Geobacillus</taxon>
        <taxon>Geobacillus thermoleovorans group</taxon>
    </lineage>
</organism>
<keyword id="KW-0021">Allosteric enzyme</keyword>
<keyword id="KW-0963">Cytoplasm</keyword>
<keyword id="KW-0520">NAD</keyword>
<keyword id="KW-0560">Oxidoreductase</keyword>
<keyword id="KW-0597">Phosphoprotein</keyword>
<keyword id="KW-1185">Reference proteome</keyword>
<evidence type="ECO:0000255" key="1">
    <source>
        <dbReference type="HAMAP-Rule" id="MF_00488"/>
    </source>
</evidence>
<reference key="1">
    <citation type="journal article" date="2004" name="Nucleic Acids Res.">
        <title>Thermoadaptation trait revealed by the genome sequence of thermophilic Geobacillus kaustophilus.</title>
        <authorList>
            <person name="Takami H."/>
            <person name="Takaki Y."/>
            <person name="Chee G.-J."/>
            <person name="Nishi S."/>
            <person name="Shimamura S."/>
            <person name="Suzuki H."/>
            <person name="Matsui S."/>
            <person name="Uchiyama I."/>
        </authorList>
    </citation>
    <scope>NUCLEOTIDE SEQUENCE [LARGE SCALE GENOMIC DNA]</scope>
    <source>
        <strain>HTA426</strain>
    </source>
</reference>
<protein>
    <recommendedName>
        <fullName evidence="1">L-lactate dehydrogenase</fullName>
        <shortName evidence="1">L-LDH</shortName>
        <ecNumber evidence="1">1.1.1.27</ecNumber>
    </recommendedName>
</protein>
<proteinExistence type="inferred from homology"/>
<dbReference type="EC" id="1.1.1.27" evidence="1"/>
<dbReference type="EMBL" id="BA000043">
    <property type="protein sequence ID" value="BAD74760.1"/>
    <property type="molecule type" value="Genomic_DNA"/>
</dbReference>
<dbReference type="RefSeq" id="WP_011229979.1">
    <property type="nucleotide sequence ID" value="NC_006510.1"/>
</dbReference>
<dbReference type="SMR" id="Q5L2S0"/>
<dbReference type="STRING" id="235909.GK0475"/>
<dbReference type="KEGG" id="gka:GK0475"/>
<dbReference type="eggNOG" id="COG0039">
    <property type="taxonomic scope" value="Bacteria"/>
</dbReference>
<dbReference type="HOGENOM" id="CLU_045401_1_1_9"/>
<dbReference type="UniPathway" id="UPA00554">
    <property type="reaction ID" value="UER00611"/>
</dbReference>
<dbReference type="Proteomes" id="UP000001172">
    <property type="component" value="Chromosome"/>
</dbReference>
<dbReference type="GO" id="GO:0005737">
    <property type="term" value="C:cytoplasm"/>
    <property type="evidence" value="ECO:0007669"/>
    <property type="project" value="UniProtKB-SubCell"/>
</dbReference>
<dbReference type="GO" id="GO:0004459">
    <property type="term" value="F:L-lactate dehydrogenase activity"/>
    <property type="evidence" value="ECO:0007669"/>
    <property type="project" value="UniProtKB-UniRule"/>
</dbReference>
<dbReference type="GO" id="GO:0006096">
    <property type="term" value="P:glycolytic process"/>
    <property type="evidence" value="ECO:0007669"/>
    <property type="project" value="UniProtKB-UniRule"/>
</dbReference>
<dbReference type="GO" id="GO:0006089">
    <property type="term" value="P:lactate metabolic process"/>
    <property type="evidence" value="ECO:0007669"/>
    <property type="project" value="TreeGrafter"/>
</dbReference>
<dbReference type="CDD" id="cd05291">
    <property type="entry name" value="HicDH_like"/>
    <property type="match status" value="1"/>
</dbReference>
<dbReference type="FunFam" id="3.40.50.720:FF:000018">
    <property type="entry name" value="Malate dehydrogenase"/>
    <property type="match status" value="1"/>
</dbReference>
<dbReference type="Gene3D" id="3.90.110.10">
    <property type="entry name" value="Lactate dehydrogenase/glycoside hydrolase, family 4, C-terminal"/>
    <property type="match status" value="1"/>
</dbReference>
<dbReference type="Gene3D" id="3.40.50.720">
    <property type="entry name" value="NAD(P)-binding Rossmann-like Domain"/>
    <property type="match status" value="1"/>
</dbReference>
<dbReference type="HAMAP" id="MF_00488">
    <property type="entry name" value="Lactate_dehydrog"/>
    <property type="match status" value="1"/>
</dbReference>
<dbReference type="InterPro" id="IPR001557">
    <property type="entry name" value="L-lactate/malate_DH"/>
</dbReference>
<dbReference type="InterPro" id="IPR011304">
    <property type="entry name" value="L-lactate_DH"/>
</dbReference>
<dbReference type="InterPro" id="IPR018177">
    <property type="entry name" value="L-lactate_DH_AS"/>
</dbReference>
<dbReference type="InterPro" id="IPR022383">
    <property type="entry name" value="Lactate/malate_DH_C"/>
</dbReference>
<dbReference type="InterPro" id="IPR001236">
    <property type="entry name" value="Lactate/malate_DH_N"/>
</dbReference>
<dbReference type="InterPro" id="IPR015955">
    <property type="entry name" value="Lactate_DH/Glyco_Ohase_4_C"/>
</dbReference>
<dbReference type="InterPro" id="IPR036291">
    <property type="entry name" value="NAD(P)-bd_dom_sf"/>
</dbReference>
<dbReference type="NCBIfam" id="TIGR01771">
    <property type="entry name" value="L-LDH-NAD"/>
    <property type="match status" value="1"/>
</dbReference>
<dbReference type="NCBIfam" id="NF000824">
    <property type="entry name" value="PRK00066.1"/>
    <property type="match status" value="1"/>
</dbReference>
<dbReference type="NCBIfam" id="NF004863">
    <property type="entry name" value="PRK06223.1"/>
    <property type="match status" value="1"/>
</dbReference>
<dbReference type="PANTHER" id="PTHR43128">
    <property type="entry name" value="L-2-HYDROXYCARBOXYLATE DEHYDROGENASE (NAD(P)(+))"/>
    <property type="match status" value="1"/>
</dbReference>
<dbReference type="PANTHER" id="PTHR43128:SF16">
    <property type="entry name" value="L-LACTATE DEHYDROGENASE"/>
    <property type="match status" value="1"/>
</dbReference>
<dbReference type="Pfam" id="PF02866">
    <property type="entry name" value="Ldh_1_C"/>
    <property type="match status" value="1"/>
</dbReference>
<dbReference type="Pfam" id="PF00056">
    <property type="entry name" value="Ldh_1_N"/>
    <property type="match status" value="1"/>
</dbReference>
<dbReference type="PIRSF" id="PIRSF000102">
    <property type="entry name" value="Lac_mal_DH"/>
    <property type="match status" value="1"/>
</dbReference>
<dbReference type="PRINTS" id="PR00086">
    <property type="entry name" value="LLDHDRGNASE"/>
</dbReference>
<dbReference type="SUPFAM" id="SSF56327">
    <property type="entry name" value="LDH C-terminal domain-like"/>
    <property type="match status" value="1"/>
</dbReference>
<dbReference type="SUPFAM" id="SSF51735">
    <property type="entry name" value="NAD(P)-binding Rossmann-fold domains"/>
    <property type="match status" value="1"/>
</dbReference>
<dbReference type="PROSITE" id="PS00064">
    <property type="entry name" value="L_LDH"/>
    <property type="match status" value="1"/>
</dbReference>
<name>LDH_GEOKA</name>
<comment type="function">
    <text evidence="1">Catalyzes the conversion of lactate to pyruvate.</text>
</comment>
<comment type="catalytic activity">
    <reaction evidence="1">
        <text>(S)-lactate + NAD(+) = pyruvate + NADH + H(+)</text>
        <dbReference type="Rhea" id="RHEA:23444"/>
        <dbReference type="ChEBI" id="CHEBI:15361"/>
        <dbReference type="ChEBI" id="CHEBI:15378"/>
        <dbReference type="ChEBI" id="CHEBI:16651"/>
        <dbReference type="ChEBI" id="CHEBI:57540"/>
        <dbReference type="ChEBI" id="CHEBI:57945"/>
        <dbReference type="EC" id="1.1.1.27"/>
    </reaction>
</comment>
<comment type="activity regulation">
    <text evidence="1">Allosterically activated by fructose 1,6-bisphosphate (FBP).</text>
</comment>
<comment type="pathway">
    <text evidence="1">Fermentation; pyruvate fermentation to lactate; (S)-lactate from pyruvate: step 1/1.</text>
</comment>
<comment type="subunit">
    <text evidence="1">Homotetramer.</text>
</comment>
<comment type="subcellular location">
    <subcellularLocation>
        <location evidence="1">Cytoplasm</location>
    </subcellularLocation>
</comment>
<comment type="similarity">
    <text evidence="1">Belongs to the LDH/MDH superfamily. LDH family.</text>
</comment>
<sequence>MKNGRGNRVAVVGTGFVGASYAFALMNQGIADEIVLIDANENKAEGDAMDFNHGKVFAPKPADIWHGDYDDCRDADLVVICAGANQKPGETRLDLVDKNIAIFRSIVESVMASGFQGLFLVATNPVDILTYATWKFSGLPQERVIGSGTILDTARFRFLLGDYFAVAPTNVHAYIIGEHGDTELPVWSQADIGGVPIRKLVESKGEEAQKELERIFVNVRDAAYQIIEKKGATYYGIAMGLARVTRAILHHENAILTVSAYLDGPYGERDVYIGVPAVINRNGIREVIEIELDEEEKKWFHRSAATLKGVLARYFAQ</sequence>